<evidence type="ECO:0000255" key="1">
    <source>
        <dbReference type="HAMAP-Rule" id="MF_01341"/>
    </source>
</evidence>
<evidence type="ECO:0000256" key="2">
    <source>
        <dbReference type="SAM" id="MobiDB-lite"/>
    </source>
</evidence>
<evidence type="ECO:0000305" key="3"/>
<comment type="function">
    <text evidence="1">Binds to the 23S rRNA.</text>
</comment>
<comment type="subunit">
    <text evidence="1">Part of the 50S ribosomal subunit.</text>
</comment>
<comment type="similarity">
    <text evidence="1">Belongs to the universal ribosomal protein uL15 family.</text>
</comment>
<dbReference type="EMBL" id="CP001358">
    <property type="protein sequence ID" value="ACL48587.1"/>
    <property type="molecule type" value="Genomic_DNA"/>
</dbReference>
<dbReference type="SMR" id="B8IYL0"/>
<dbReference type="STRING" id="525146.Ddes_0679"/>
<dbReference type="KEGG" id="dds:Ddes_0679"/>
<dbReference type="eggNOG" id="COG0200">
    <property type="taxonomic scope" value="Bacteria"/>
</dbReference>
<dbReference type="HOGENOM" id="CLU_055188_4_2_7"/>
<dbReference type="GO" id="GO:0022625">
    <property type="term" value="C:cytosolic large ribosomal subunit"/>
    <property type="evidence" value="ECO:0007669"/>
    <property type="project" value="TreeGrafter"/>
</dbReference>
<dbReference type="GO" id="GO:0019843">
    <property type="term" value="F:rRNA binding"/>
    <property type="evidence" value="ECO:0007669"/>
    <property type="project" value="UniProtKB-UniRule"/>
</dbReference>
<dbReference type="GO" id="GO:0003735">
    <property type="term" value="F:structural constituent of ribosome"/>
    <property type="evidence" value="ECO:0007669"/>
    <property type="project" value="InterPro"/>
</dbReference>
<dbReference type="GO" id="GO:0006412">
    <property type="term" value="P:translation"/>
    <property type="evidence" value="ECO:0007669"/>
    <property type="project" value="UniProtKB-UniRule"/>
</dbReference>
<dbReference type="Gene3D" id="3.100.10.10">
    <property type="match status" value="1"/>
</dbReference>
<dbReference type="HAMAP" id="MF_01341">
    <property type="entry name" value="Ribosomal_uL15"/>
    <property type="match status" value="1"/>
</dbReference>
<dbReference type="InterPro" id="IPR030878">
    <property type="entry name" value="Ribosomal_uL15"/>
</dbReference>
<dbReference type="InterPro" id="IPR021131">
    <property type="entry name" value="Ribosomal_uL15/eL18"/>
</dbReference>
<dbReference type="InterPro" id="IPR036227">
    <property type="entry name" value="Ribosomal_uL15/eL18_sf"/>
</dbReference>
<dbReference type="InterPro" id="IPR005749">
    <property type="entry name" value="Ribosomal_uL15_bac-type"/>
</dbReference>
<dbReference type="InterPro" id="IPR001196">
    <property type="entry name" value="Ribosomal_uL15_CS"/>
</dbReference>
<dbReference type="NCBIfam" id="TIGR01071">
    <property type="entry name" value="rplO_bact"/>
    <property type="match status" value="1"/>
</dbReference>
<dbReference type="PANTHER" id="PTHR12934">
    <property type="entry name" value="50S RIBOSOMAL PROTEIN L15"/>
    <property type="match status" value="1"/>
</dbReference>
<dbReference type="PANTHER" id="PTHR12934:SF11">
    <property type="entry name" value="LARGE RIBOSOMAL SUBUNIT PROTEIN UL15M"/>
    <property type="match status" value="1"/>
</dbReference>
<dbReference type="Pfam" id="PF00828">
    <property type="entry name" value="Ribosomal_L27A"/>
    <property type="match status" value="1"/>
</dbReference>
<dbReference type="SUPFAM" id="SSF52080">
    <property type="entry name" value="Ribosomal proteins L15p and L18e"/>
    <property type="match status" value="1"/>
</dbReference>
<dbReference type="PROSITE" id="PS00475">
    <property type="entry name" value="RIBOSOMAL_L15"/>
    <property type="match status" value="1"/>
</dbReference>
<organism>
    <name type="scientific">Desulfovibrio desulfuricans (strain ATCC 27774 / DSM 6949 / MB)</name>
    <dbReference type="NCBI Taxonomy" id="525146"/>
    <lineage>
        <taxon>Bacteria</taxon>
        <taxon>Pseudomonadati</taxon>
        <taxon>Thermodesulfobacteriota</taxon>
        <taxon>Desulfovibrionia</taxon>
        <taxon>Desulfovibrionales</taxon>
        <taxon>Desulfovibrionaceae</taxon>
        <taxon>Desulfovibrio</taxon>
    </lineage>
</organism>
<gene>
    <name evidence="1" type="primary">rplO</name>
    <name type="ordered locus">Ddes_0679</name>
</gene>
<reference key="1">
    <citation type="submission" date="2009-01" db="EMBL/GenBank/DDBJ databases">
        <title>Complete sequence of Desulfovibrio desulfuricans subsp. desulfuricans str. ATCC 27774.</title>
        <authorList>
            <consortium name="US DOE Joint Genome Institute"/>
            <person name="Lucas S."/>
            <person name="Copeland A."/>
            <person name="Lapidus A."/>
            <person name="Glavina del Rio T."/>
            <person name="Tice H."/>
            <person name="Bruce D."/>
            <person name="Goodwin L."/>
            <person name="Pitluck S."/>
            <person name="Sims D."/>
            <person name="Lu M."/>
            <person name="Kiss H."/>
            <person name="Meineke L."/>
            <person name="Brettin T."/>
            <person name="Detter J.C."/>
            <person name="Han C."/>
            <person name="Larimer F."/>
            <person name="Land M."/>
            <person name="Hauser L."/>
            <person name="Kyrpides N."/>
            <person name="Ovchinnikova G."/>
            <person name="Hazen T.C."/>
        </authorList>
    </citation>
    <scope>NUCLEOTIDE SEQUENCE [LARGE SCALE GENOMIC DNA]</scope>
    <source>
        <strain>ATCC 27774 / DSM 6949 / MB</strain>
    </source>
</reference>
<feature type="chain" id="PRO_1000166289" description="Large ribosomal subunit protein uL15">
    <location>
        <begin position="1"/>
        <end position="153"/>
    </location>
</feature>
<feature type="region of interest" description="Disordered" evidence="2">
    <location>
        <begin position="1"/>
        <end position="49"/>
    </location>
</feature>
<feature type="compositionally biased region" description="Gly residues" evidence="2">
    <location>
        <begin position="21"/>
        <end position="31"/>
    </location>
</feature>
<accession>B8IYL0</accession>
<name>RL15_DESDA</name>
<keyword id="KW-0687">Ribonucleoprotein</keyword>
<keyword id="KW-0689">Ribosomal protein</keyword>
<keyword id="KW-0694">RNA-binding</keyword>
<keyword id="KW-0699">rRNA-binding</keyword>
<protein>
    <recommendedName>
        <fullName evidence="1">Large ribosomal subunit protein uL15</fullName>
    </recommendedName>
    <alternativeName>
        <fullName evidence="3">50S ribosomal protein L15</fullName>
    </alternativeName>
</protein>
<sequence length="153" mass="16396">MQLHNLYPFPEERKTRRRVGRGSGSGLGCTAGKGHKGQNARAGGGVAPGFEGGQMPLQRRLPKHGFKNAPFKVTYDVINLDRLLEAFEGKDTITLDDIYARGLARMGAPVKILSRGEVKSALKVEAHKFSQTAAEKIRGAGGEVSELEAVPAA</sequence>
<proteinExistence type="inferred from homology"/>